<comment type="catalytic activity">
    <reaction evidence="1">
        <text>(S)-malate + NAD(+) = pyruvate + CO2 + NADH</text>
        <dbReference type="Rhea" id="RHEA:12653"/>
        <dbReference type="ChEBI" id="CHEBI:15361"/>
        <dbReference type="ChEBI" id="CHEBI:15589"/>
        <dbReference type="ChEBI" id="CHEBI:16526"/>
        <dbReference type="ChEBI" id="CHEBI:57540"/>
        <dbReference type="ChEBI" id="CHEBI:57945"/>
        <dbReference type="EC" id="1.1.1.38"/>
    </reaction>
</comment>
<comment type="catalytic activity">
    <reaction evidence="1">
        <text>oxaloacetate + H(+) = pyruvate + CO2</text>
        <dbReference type="Rhea" id="RHEA:15641"/>
        <dbReference type="ChEBI" id="CHEBI:15361"/>
        <dbReference type="ChEBI" id="CHEBI:15378"/>
        <dbReference type="ChEBI" id="CHEBI:16452"/>
        <dbReference type="ChEBI" id="CHEBI:16526"/>
        <dbReference type="EC" id="1.1.1.38"/>
    </reaction>
</comment>
<comment type="cofactor">
    <cofactor evidence="1">
        <name>Mg(2+)</name>
        <dbReference type="ChEBI" id="CHEBI:18420"/>
    </cofactor>
    <cofactor evidence="1">
        <name>Mn(2+)</name>
        <dbReference type="ChEBI" id="CHEBI:29035"/>
    </cofactor>
    <text evidence="1">Divalent metal cations. Prefers magnesium or manganese.</text>
</comment>
<comment type="subunit">
    <text evidence="1">Homotetramer.</text>
</comment>
<comment type="similarity">
    <text evidence="1">Belongs to the malic enzymes family.</text>
</comment>
<dbReference type="EC" id="1.1.1.38" evidence="1"/>
<dbReference type="EMBL" id="CP001252">
    <property type="protein sequence ID" value="ACK48048.1"/>
    <property type="molecule type" value="Genomic_DNA"/>
</dbReference>
<dbReference type="RefSeq" id="WP_006080238.1">
    <property type="nucleotide sequence ID" value="NC_011663.1"/>
</dbReference>
<dbReference type="SMR" id="B8E835"/>
<dbReference type="KEGG" id="sbp:Sbal223_3566"/>
<dbReference type="HOGENOM" id="CLU_011405_5_2_6"/>
<dbReference type="Proteomes" id="UP000002507">
    <property type="component" value="Chromosome"/>
</dbReference>
<dbReference type="GO" id="GO:0005829">
    <property type="term" value="C:cytosol"/>
    <property type="evidence" value="ECO:0007669"/>
    <property type="project" value="TreeGrafter"/>
</dbReference>
<dbReference type="GO" id="GO:0004471">
    <property type="term" value="F:malate dehydrogenase (decarboxylating) (NAD+) activity"/>
    <property type="evidence" value="ECO:0007669"/>
    <property type="project" value="UniProtKB-UniRule"/>
</dbReference>
<dbReference type="GO" id="GO:0046872">
    <property type="term" value="F:metal ion binding"/>
    <property type="evidence" value="ECO:0007669"/>
    <property type="project" value="UniProtKB-KW"/>
</dbReference>
<dbReference type="GO" id="GO:0051287">
    <property type="term" value="F:NAD binding"/>
    <property type="evidence" value="ECO:0007669"/>
    <property type="project" value="InterPro"/>
</dbReference>
<dbReference type="GO" id="GO:0008948">
    <property type="term" value="F:oxaloacetate decarboxylase activity"/>
    <property type="evidence" value="ECO:0007669"/>
    <property type="project" value="UniProtKB-UniRule"/>
</dbReference>
<dbReference type="GO" id="GO:0006108">
    <property type="term" value="P:malate metabolic process"/>
    <property type="evidence" value="ECO:0007669"/>
    <property type="project" value="TreeGrafter"/>
</dbReference>
<dbReference type="CDD" id="cd05312">
    <property type="entry name" value="NAD_bind_1_malic_enz"/>
    <property type="match status" value="1"/>
</dbReference>
<dbReference type="FunFam" id="3.40.50.10380:FF:000001">
    <property type="entry name" value="NAD-dependent malic enzyme"/>
    <property type="match status" value="1"/>
</dbReference>
<dbReference type="FunFam" id="3.40.50.720:FF:000055">
    <property type="entry name" value="NAD-dependent malic enzyme"/>
    <property type="match status" value="1"/>
</dbReference>
<dbReference type="Gene3D" id="3.40.50.10380">
    <property type="entry name" value="Malic enzyme, N-terminal domain"/>
    <property type="match status" value="1"/>
</dbReference>
<dbReference type="Gene3D" id="3.40.50.720">
    <property type="entry name" value="NAD(P)-binding Rossmann-like Domain"/>
    <property type="match status" value="1"/>
</dbReference>
<dbReference type="HAMAP" id="MF_01619">
    <property type="entry name" value="NAD_malic_enz"/>
    <property type="match status" value="1"/>
</dbReference>
<dbReference type="InterPro" id="IPR046346">
    <property type="entry name" value="Aminoacid_DH-like_N_sf"/>
</dbReference>
<dbReference type="InterPro" id="IPR015884">
    <property type="entry name" value="Malic_enzyme_CS"/>
</dbReference>
<dbReference type="InterPro" id="IPR012301">
    <property type="entry name" value="Malic_N_dom"/>
</dbReference>
<dbReference type="InterPro" id="IPR037062">
    <property type="entry name" value="Malic_N_dom_sf"/>
</dbReference>
<dbReference type="InterPro" id="IPR012302">
    <property type="entry name" value="Malic_NAD-bd"/>
</dbReference>
<dbReference type="InterPro" id="IPR001891">
    <property type="entry name" value="Malic_OxRdtase"/>
</dbReference>
<dbReference type="InterPro" id="IPR036291">
    <property type="entry name" value="NAD(P)-bd_dom_sf"/>
</dbReference>
<dbReference type="InterPro" id="IPR023667">
    <property type="entry name" value="NAD_malic_enz_proteobac"/>
</dbReference>
<dbReference type="NCBIfam" id="NF010052">
    <property type="entry name" value="PRK13529.1"/>
    <property type="match status" value="1"/>
</dbReference>
<dbReference type="PANTHER" id="PTHR23406">
    <property type="entry name" value="MALIC ENZYME-RELATED"/>
    <property type="match status" value="1"/>
</dbReference>
<dbReference type="PANTHER" id="PTHR23406:SF34">
    <property type="entry name" value="NAD-DEPENDENT MALIC ENZYME, MITOCHONDRIAL"/>
    <property type="match status" value="1"/>
</dbReference>
<dbReference type="Pfam" id="PF00390">
    <property type="entry name" value="malic"/>
    <property type="match status" value="1"/>
</dbReference>
<dbReference type="Pfam" id="PF03949">
    <property type="entry name" value="Malic_M"/>
    <property type="match status" value="1"/>
</dbReference>
<dbReference type="PIRSF" id="PIRSF000106">
    <property type="entry name" value="ME"/>
    <property type="match status" value="1"/>
</dbReference>
<dbReference type="PRINTS" id="PR00072">
    <property type="entry name" value="MALOXRDTASE"/>
</dbReference>
<dbReference type="SMART" id="SM01274">
    <property type="entry name" value="malic"/>
    <property type="match status" value="1"/>
</dbReference>
<dbReference type="SMART" id="SM00919">
    <property type="entry name" value="Malic_M"/>
    <property type="match status" value="1"/>
</dbReference>
<dbReference type="SUPFAM" id="SSF53223">
    <property type="entry name" value="Aminoacid dehydrogenase-like, N-terminal domain"/>
    <property type="match status" value="1"/>
</dbReference>
<dbReference type="SUPFAM" id="SSF51735">
    <property type="entry name" value="NAD(P)-binding Rossmann-fold domains"/>
    <property type="match status" value="1"/>
</dbReference>
<dbReference type="PROSITE" id="PS00331">
    <property type="entry name" value="MALIC_ENZYMES"/>
    <property type="match status" value="1"/>
</dbReference>
<evidence type="ECO:0000255" key="1">
    <source>
        <dbReference type="HAMAP-Rule" id="MF_01619"/>
    </source>
</evidence>
<proteinExistence type="inferred from homology"/>
<keyword id="KW-0479">Metal-binding</keyword>
<keyword id="KW-0520">NAD</keyword>
<keyword id="KW-0560">Oxidoreductase</keyword>
<gene>
    <name evidence="1" type="primary">maeA</name>
    <name type="ordered locus">Sbal223_3566</name>
</gene>
<accession>B8E835</accession>
<name>MAO1_SHEB2</name>
<protein>
    <recommendedName>
        <fullName evidence="1">NAD-dependent malic enzyme</fullName>
        <shortName evidence="1">NAD-ME</shortName>
        <ecNumber evidence="1">1.1.1.38</ecNumber>
    </recommendedName>
</protein>
<feature type="chain" id="PRO_1000186010" description="NAD-dependent malic enzyme">
    <location>
        <begin position="1"/>
        <end position="562"/>
    </location>
</feature>
<feature type="active site" description="Proton donor" evidence="1">
    <location>
        <position position="101"/>
    </location>
</feature>
<feature type="active site" description="Proton acceptor" evidence="1">
    <location>
        <position position="172"/>
    </location>
</feature>
<feature type="binding site" evidence="1">
    <location>
        <position position="154"/>
    </location>
    <ligand>
        <name>NAD(+)</name>
        <dbReference type="ChEBI" id="CHEBI:57540"/>
    </ligand>
</feature>
<feature type="binding site" evidence="1">
    <location>
        <position position="243"/>
    </location>
    <ligand>
        <name>a divalent metal cation</name>
        <dbReference type="ChEBI" id="CHEBI:60240"/>
    </ligand>
</feature>
<feature type="binding site" evidence="1">
    <location>
        <position position="244"/>
    </location>
    <ligand>
        <name>a divalent metal cation</name>
        <dbReference type="ChEBI" id="CHEBI:60240"/>
    </ligand>
</feature>
<feature type="binding site" evidence="1">
    <location>
        <position position="267"/>
    </location>
    <ligand>
        <name>a divalent metal cation</name>
        <dbReference type="ChEBI" id="CHEBI:60240"/>
    </ligand>
</feature>
<feature type="binding site" evidence="1">
    <location>
        <position position="267"/>
    </location>
    <ligand>
        <name>NAD(+)</name>
        <dbReference type="ChEBI" id="CHEBI:57540"/>
    </ligand>
</feature>
<feature type="binding site" evidence="1">
    <location>
        <position position="415"/>
    </location>
    <ligand>
        <name>NAD(+)</name>
        <dbReference type="ChEBI" id="CHEBI:57540"/>
    </ligand>
</feature>
<feature type="site" description="Important for activity" evidence="1">
    <location>
        <position position="267"/>
    </location>
</feature>
<sequence length="562" mass="62116">MDDNKRPLYLPFAGPAILEAPLINKGSAFSEEERIFFNLEGLVPYAIETIEEQASRAYDQFRSFNNDLDKHIYLRNIQDTNETLFYRLVQNNISEMMPIIYTPTVGLACERFSKNYRRNRGLFISYPNKDRIDDILNNSTRQKVKIIVVTDGERILGLGDQGIGGMGIPIGKLSLYTSCGGISPAYTLPITLDVGTDNPQLLEDPMYMGWRHPRIGGEEYAEFIEAFMQAVHVRWPDTLIQFEDFAQKNAMPILERYKDRYCCFNDDIQGTAAVAVGSLLAACKAAGTELNQQRIAFLGAGSAGCGIAEAIVAQMVSEGISDEQARTQVCMVDRWGLLLDNMPNLLPFQQKLAQKCTNIQNWSNFSDNISLLDVVNNTKPTVLIGVSGVPGLFTEEIIRAMHSHCARPIIFPLSNPTSRVEATPKDILHWTSGQALVATGSPFEPVVVDGETFEIAQCNNSFIFPGIGLGVLASGARHVSDAMLMASSRALAECSPLAIDGSGPLLPKLEDIHAVSKHIAFAVGKVAVEQGLTLPMSDEILQQSIEGNFWSPEYRRYKRTSF</sequence>
<reference key="1">
    <citation type="submission" date="2008-12" db="EMBL/GenBank/DDBJ databases">
        <title>Complete sequence of chromosome of Shewanella baltica OS223.</title>
        <authorList>
            <consortium name="US DOE Joint Genome Institute"/>
            <person name="Lucas S."/>
            <person name="Copeland A."/>
            <person name="Lapidus A."/>
            <person name="Glavina del Rio T."/>
            <person name="Dalin E."/>
            <person name="Tice H."/>
            <person name="Bruce D."/>
            <person name="Goodwin L."/>
            <person name="Pitluck S."/>
            <person name="Chertkov O."/>
            <person name="Meincke L."/>
            <person name="Brettin T."/>
            <person name="Detter J.C."/>
            <person name="Han C."/>
            <person name="Kuske C.R."/>
            <person name="Larimer F."/>
            <person name="Land M."/>
            <person name="Hauser L."/>
            <person name="Kyrpides N."/>
            <person name="Ovchinnikova G."/>
            <person name="Brettar I."/>
            <person name="Rodrigues J."/>
            <person name="Konstantinidis K."/>
            <person name="Tiedje J."/>
        </authorList>
    </citation>
    <scope>NUCLEOTIDE SEQUENCE [LARGE SCALE GENOMIC DNA]</scope>
    <source>
        <strain>OS223</strain>
    </source>
</reference>
<organism>
    <name type="scientific">Shewanella baltica (strain OS223)</name>
    <dbReference type="NCBI Taxonomy" id="407976"/>
    <lineage>
        <taxon>Bacteria</taxon>
        <taxon>Pseudomonadati</taxon>
        <taxon>Pseudomonadota</taxon>
        <taxon>Gammaproteobacteria</taxon>
        <taxon>Alteromonadales</taxon>
        <taxon>Shewanellaceae</taxon>
        <taxon>Shewanella</taxon>
    </lineage>
</organism>